<comment type="catalytic activity">
    <reaction evidence="1">
        <text>agmatine + H2O = N-carbamoylputrescine + NH4(+)</text>
        <dbReference type="Rhea" id="RHEA:18037"/>
        <dbReference type="ChEBI" id="CHEBI:15377"/>
        <dbReference type="ChEBI" id="CHEBI:28938"/>
        <dbReference type="ChEBI" id="CHEBI:58145"/>
        <dbReference type="ChEBI" id="CHEBI:58318"/>
        <dbReference type="EC" id="3.5.3.12"/>
    </reaction>
</comment>
<comment type="similarity">
    <text evidence="1">Belongs to the agmatine deiminase family.</text>
</comment>
<keyword id="KW-0378">Hydrolase</keyword>
<proteinExistence type="inferred from homology"/>
<dbReference type="EC" id="3.5.3.12" evidence="1"/>
<dbReference type="EMBL" id="CP000681">
    <property type="protein sequence ID" value="ABP76479.1"/>
    <property type="molecule type" value="Genomic_DNA"/>
</dbReference>
<dbReference type="SMR" id="A4Y946"/>
<dbReference type="STRING" id="319224.Sputcn32_2760"/>
<dbReference type="KEGG" id="spc:Sputcn32_2760"/>
<dbReference type="eggNOG" id="COG2957">
    <property type="taxonomic scope" value="Bacteria"/>
</dbReference>
<dbReference type="HOGENOM" id="CLU_037682_1_0_6"/>
<dbReference type="GO" id="GO:0047632">
    <property type="term" value="F:agmatine deiminase activity"/>
    <property type="evidence" value="ECO:0007669"/>
    <property type="project" value="UniProtKB-UniRule"/>
</dbReference>
<dbReference type="GO" id="GO:0004668">
    <property type="term" value="F:protein-arginine deiminase activity"/>
    <property type="evidence" value="ECO:0007669"/>
    <property type="project" value="InterPro"/>
</dbReference>
<dbReference type="GO" id="GO:0009446">
    <property type="term" value="P:putrescine biosynthetic process"/>
    <property type="evidence" value="ECO:0007669"/>
    <property type="project" value="InterPro"/>
</dbReference>
<dbReference type="Gene3D" id="3.75.10.10">
    <property type="entry name" value="L-arginine/glycine Amidinotransferase, Chain A"/>
    <property type="match status" value="1"/>
</dbReference>
<dbReference type="HAMAP" id="MF_01841">
    <property type="entry name" value="Agmatine_deimin"/>
    <property type="match status" value="1"/>
</dbReference>
<dbReference type="InterPro" id="IPR017754">
    <property type="entry name" value="Agmatine_deiminase"/>
</dbReference>
<dbReference type="InterPro" id="IPR007466">
    <property type="entry name" value="Peptidyl-Arg-deiminase_porph"/>
</dbReference>
<dbReference type="NCBIfam" id="TIGR03380">
    <property type="entry name" value="agmatine_aguA"/>
    <property type="match status" value="1"/>
</dbReference>
<dbReference type="NCBIfam" id="NF010070">
    <property type="entry name" value="PRK13551.1"/>
    <property type="match status" value="1"/>
</dbReference>
<dbReference type="PANTHER" id="PTHR31377">
    <property type="entry name" value="AGMATINE DEIMINASE-RELATED"/>
    <property type="match status" value="1"/>
</dbReference>
<dbReference type="PANTHER" id="PTHR31377:SF0">
    <property type="entry name" value="AGMATINE DEIMINASE-RELATED"/>
    <property type="match status" value="1"/>
</dbReference>
<dbReference type="Pfam" id="PF04371">
    <property type="entry name" value="PAD_porph"/>
    <property type="match status" value="1"/>
</dbReference>
<dbReference type="SUPFAM" id="SSF55909">
    <property type="entry name" value="Pentein"/>
    <property type="match status" value="1"/>
</dbReference>
<gene>
    <name evidence="1" type="primary">aguA</name>
    <name type="ordered locus">Sputcn32_2760</name>
</gene>
<name>AGUA_SHEPC</name>
<feature type="chain" id="PRO_1000070570" description="Putative agmatine deiminase">
    <location>
        <begin position="1"/>
        <end position="370"/>
    </location>
</feature>
<feature type="active site" description="Amidino-cysteine intermediate" evidence="1">
    <location>
        <position position="361"/>
    </location>
</feature>
<accession>A4Y946</accession>
<organism>
    <name type="scientific">Shewanella putrefaciens (strain CN-32 / ATCC BAA-453)</name>
    <dbReference type="NCBI Taxonomy" id="319224"/>
    <lineage>
        <taxon>Bacteria</taxon>
        <taxon>Pseudomonadati</taxon>
        <taxon>Pseudomonadota</taxon>
        <taxon>Gammaproteobacteria</taxon>
        <taxon>Alteromonadales</taxon>
        <taxon>Shewanellaceae</taxon>
        <taxon>Shewanella</taxon>
    </lineage>
</organism>
<reference key="1">
    <citation type="submission" date="2007-04" db="EMBL/GenBank/DDBJ databases">
        <title>Complete sequence of Shewanella putrefaciens CN-32.</title>
        <authorList>
            <consortium name="US DOE Joint Genome Institute"/>
            <person name="Copeland A."/>
            <person name="Lucas S."/>
            <person name="Lapidus A."/>
            <person name="Barry K."/>
            <person name="Detter J.C."/>
            <person name="Glavina del Rio T."/>
            <person name="Hammon N."/>
            <person name="Israni S."/>
            <person name="Dalin E."/>
            <person name="Tice H."/>
            <person name="Pitluck S."/>
            <person name="Chain P."/>
            <person name="Malfatti S."/>
            <person name="Shin M."/>
            <person name="Vergez L."/>
            <person name="Schmutz J."/>
            <person name="Larimer F."/>
            <person name="Land M."/>
            <person name="Hauser L."/>
            <person name="Kyrpides N."/>
            <person name="Mikhailova N."/>
            <person name="Romine M.F."/>
            <person name="Fredrickson J."/>
            <person name="Tiedje J."/>
            <person name="Richardson P."/>
        </authorList>
    </citation>
    <scope>NUCLEOTIDE SEQUENCE [LARGE SCALE GENOMIC DNA]</scope>
    <source>
        <strain>CN-32 / ATCC BAA-453</strain>
    </source>
</reference>
<protein>
    <recommendedName>
        <fullName evidence="1">Putative agmatine deiminase</fullName>
        <ecNumber evidence="1">3.5.3.12</ecNumber>
    </recommendedName>
    <alternativeName>
        <fullName evidence="1">Agmatine iminohydrolase</fullName>
    </alternativeName>
</protein>
<sequence>MTNVNVDVTPLTTKPSQDGFYMPAEWAAQQAVWMIWPYRPDNWRAAGAYAQATFAKVADAIGAATPVYMGVPKAFLAEAKAVMPSHVTLVEMDSNDCWARDTGPTVVVNDNGECRGVDWGFNAWGGHNGGLYFPWDKDEQVAQQMLAQHGFARYSAPLILEGGSIHVDGEGTCMTSAECLLNANRNPELTKEQIEDLLRDYLNVKQFIWLQDGVYMDETDGHIDNMSCFARPGEVILHWTDDETDPQYPRSKAALEVLQNTVDAKGRKLKIHLLPQPGPLYCSEEESKGVTEGTGVPRTAGERLAGSYVNFLITNHRIVFPLLDPATDDIAAQKLQEIFPEHEIVGVPAREILLGGGNIHCITQQIPAGK</sequence>
<evidence type="ECO:0000255" key="1">
    <source>
        <dbReference type="HAMAP-Rule" id="MF_01841"/>
    </source>
</evidence>